<keyword id="KW-0025">Alternative splicing</keyword>
<keyword id="KW-0903">Direct protein sequencing</keyword>
<keyword id="KW-1017">Isopeptide bond</keyword>
<keyword id="KW-0507">mRNA processing</keyword>
<keyword id="KW-0508">mRNA splicing</keyword>
<keyword id="KW-0539">Nucleus</keyword>
<keyword id="KW-0597">Phosphoprotein</keyword>
<keyword id="KW-1267">Proteomics identification</keyword>
<keyword id="KW-1185">Reference proteome</keyword>
<keyword id="KW-0747">Spliceosome</keyword>
<keyword id="KW-0832">Ubl conjugation</keyword>
<name>SREK1_HUMAN</name>
<proteinExistence type="evidence at protein level"/>
<protein>
    <recommendedName>
        <fullName>Splicing regulatory glutamine/lysine-rich protein 1</fullName>
    </recommendedName>
    <alternativeName>
        <fullName>Serine/arginine-rich-splicing regulatory protein 86</fullName>
        <shortName>SRrp86</shortName>
    </alternativeName>
    <alternativeName>
        <fullName>Splicing factor, arginine/serine-rich 12</fullName>
    </alternativeName>
    <alternativeName>
        <fullName>Splicing regulatory protein 508</fullName>
        <shortName>SRrp508</shortName>
    </alternativeName>
</protein>
<feature type="chain" id="PRO_0000081940" description="Splicing regulatory glutamine/lysine-rich protein 1">
    <location>
        <begin position="1"/>
        <end position="508"/>
    </location>
</feature>
<feature type="domain" description="RRM" evidence="2">
    <location>
        <begin position="66"/>
        <end position="142"/>
    </location>
</feature>
<feature type="region of interest" description="Disordered" evidence="3">
    <location>
        <begin position="173"/>
        <end position="508"/>
    </location>
</feature>
<feature type="compositionally biased region" description="Basic and acidic residues" evidence="3">
    <location>
        <begin position="180"/>
        <end position="189"/>
    </location>
</feature>
<feature type="compositionally biased region" description="Basic residues" evidence="3">
    <location>
        <begin position="190"/>
        <end position="259"/>
    </location>
</feature>
<feature type="compositionally biased region" description="Basic and acidic residues" evidence="3">
    <location>
        <begin position="260"/>
        <end position="355"/>
    </location>
</feature>
<feature type="compositionally biased region" description="Basic residues" evidence="3">
    <location>
        <begin position="372"/>
        <end position="388"/>
    </location>
</feature>
<feature type="compositionally biased region" description="Basic and acidic residues" evidence="3">
    <location>
        <begin position="419"/>
        <end position="488"/>
    </location>
</feature>
<feature type="compositionally biased region" description="Polar residues" evidence="3">
    <location>
        <begin position="489"/>
        <end position="508"/>
    </location>
</feature>
<feature type="modified residue" description="Phosphoserine" evidence="9">
    <location>
        <position position="171"/>
    </location>
</feature>
<feature type="modified residue" description="Phosphoserine" evidence="8 9">
    <location>
        <position position="184"/>
    </location>
</feature>
<feature type="modified residue" description="Phosphothreonine" evidence="9">
    <location>
        <position position="363"/>
    </location>
</feature>
<feature type="cross-link" description="Glycyl lysine isopeptide (Lys-Gly) (interchain with G-Cter in SUMO2)" evidence="10">
    <location>
        <position position="504"/>
    </location>
</feature>
<feature type="splice variant" id="VSP_008399" description="In isoform 2." evidence="6">
    <original>M</original>
    <variation>MNSGGGFGLGLGFGLTPTSVIQVTNLSSAVTSEQMRTLFSFLGEIEELRLYPPDNAPLAFSSKVCYVKFRDPSSVGVAQHLTNTVFIDRALIVVPCAEGKIPEESKALSLLAPAPTM</variation>
    <location>
        <position position="1"/>
    </location>
</feature>
<reference key="1">
    <citation type="journal article" date="2002" name="Yi Chuan Xue Bao">
        <title>Molecular cloning, characterization, chromosomal assignment, genomic organization and verification of SFRS12(SRrp508), a novel member of human SR protein superfamily and a human homolog of rat SRrp86.</title>
        <authorList>
            <person name="Zhang D.L."/>
            <person name="Sun X.J."/>
            <person name="Ling L.J."/>
            <person name="Chen R.S."/>
            <person name="Ma D.L."/>
        </authorList>
    </citation>
    <scope>NUCLEOTIDE SEQUENCE [MRNA] (ISOFORM 1)</scope>
    <source>
        <tissue>Pancreas</tissue>
    </source>
</reference>
<reference key="2">
    <citation type="journal article" date="2004" name="Genome Res.">
        <title>The status, quality, and expansion of the NIH full-length cDNA project: the Mammalian Gene Collection (MGC).</title>
        <authorList>
            <consortium name="The MGC Project Team"/>
        </authorList>
    </citation>
    <scope>NUCLEOTIDE SEQUENCE [LARGE SCALE MRNA] (ISOFORMS 1 AND 2)</scope>
    <source>
        <tissue>Mammary gland</tissue>
        <tissue>Testis</tissue>
    </source>
</reference>
<reference key="3">
    <citation type="journal article" date="2002" name="Genome Res.">
        <title>Large-scale proteomic analysis of the human spliceosome.</title>
        <authorList>
            <person name="Rappsilber J."/>
            <person name="Ryder U."/>
            <person name="Lamond A.I."/>
            <person name="Mann M."/>
        </authorList>
    </citation>
    <scope>PARTIAL PROTEIN SEQUENCE</scope>
    <scope>INTERACTION WITH THE SPLICEOSOME</scope>
    <scope>IDENTIFICATION BY MASS SPECTROMETRY</scope>
</reference>
<reference key="4">
    <citation type="journal article" date="2004" name="J. Mol. Neurosci.">
        <title>The splicing regulatory protein p18SRP is down-regulated in Alzheimer's disease brain.</title>
        <authorList>
            <person name="Heese K."/>
            <person name="Fujita M."/>
            <person name="Akatsu H."/>
            <person name="Yamamoto T."/>
            <person name="Kosaka K."/>
            <person name="Nagai Y."/>
            <person name="Sawada T."/>
        </authorList>
    </citation>
    <scope>INTERACTION WITH SREK1IP1</scope>
</reference>
<reference key="5">
    <citation type="journal article" date="2008" name="Proc. Natl. Acad. Sci. U.S.A.">
        <title>A quantitative atlas of mitotic phosphorylation.</title>
        <authorList>
            <person name="Dephoure N."/>
            <person name="Zhou C."/>
            <person name="Villen J."/>
            <person name="Beausoleil S.A."/>
            <person name="Bakalarski C.E."/>
            <person name="Elledge S.J."/>
            <person name="Gygi S.P."/>
        </authorList>
    </citation>
    <scope>PHOSPHORYLATION [LARGE SCALE ANALYSIS] AT SER-184</scope>
    <scope>IDENTIFICATION BY MASS SPECTROMETRY [LARGE SCALE ANALYSIS]</scope>
    <source>
        <tissue>Cervix carcinoma</tissue>
    </source>
</reference>
<reference key="6">
    <citation type="journal article" date="2013" name="J. Proteome Res.">
        <title>Toward a comprehensive characterization of a human cancer cell phosphoproteome.</title>
        <authorList>
            <person name="Zhou H."/>
            <person name="Di Palma S."/>
            <person name="Preisinger C."/>
            <person name="Peng M."/>
            <person name="Polat A.N."/>
            <person name="Heck A.J."/>
            <person name="Mohammed S."/>
        </authorList>
    </citation>
    <scope>PHOSPHORYLATION [LARGE SCALE ANALYSIS] AT SER-171; SER-184 AND THR-363</scope>
    <scope>IDENTIFICATION BY MASS SPECTROMETRY [LARGE SCALE ANALYSIS]</scope>
    <source>
        <tissue>Erythroleukemia</tissue>
    </source>
</reference>
<reference key="7">
    <citation type="journal article" date="2017" name="Nat. Struct. Mol. Biol.">
        <title>Site-specific mapping of the human SUMO proteome reveals co-modification with phosphorylation.</title>
        <authorList>
            <person name="Hendriks I.A."/>
            <person name="Lyon D."/>
            <person name="Young C."/>
            <person name="Jensen L.J."/>
            <person name="Vertegaal A.C."/>
            <person name="Nielsen M.L."/>
        </authorList>
    </citation>
    <scope>SUMOYLATION [LARGE SCALE ANALYSIS] AT LYS-504</scope>
    <scope>IDENTIFICATION BY MASS SPECTROMETRY [LARGE SCALE ANALYSIS]</scope>
</reference>
<gene>
    <name type="primary">SREK1</name>
    <name type="synonym">SFRS12</name>
    <name type="synonym">SRRP86</name>
</gene>
<sequence length="508" mass="59380">MTSLMPGAGLLPIPTPNPLTTLGVSLSSLGAIPAAALDPNIATLGEIPQPPLMGNVDPSKIDEIRRTVYVGNLNSQTTTADQLLEFFKQVGEVKFVRMAGDETQPTRFAFVEFADQNSVPRALAFNGVMFGDRPLKINHSNNAIVKPPEMTPQAAAKELEEVMKRVREAQSFISAAIEPESGKSNERKGGRSRSHTRSKSRSSSKSHSRRKRSQSKHRSRSHNRSRSRQKDRRRSKSPHKKRSKSRERRKSRSRSHSRDKRKDTREKIKEKERVKEKDREKEREREKEREKEKERGKNKDRDKEREKDREKDKEKDREREREKEHEKDRDKEKEKEQDKEKEREKDRSKEIDEKRKKDKKSRTPPRSYNASRRSRSSSRERRRRRSRSSSRSPRTSKTIKRKSSRSPSPRSRNKKDKKREKERDHISERRERERSTSMRKSSNDRDGKEKLEKNSTSLKEKEHNKEPDSSVSKEVDDKDAPRTEENKIQHNGNCQLNEENLSTKTEAV</sequence>
<accession>Q8WXA9</accession>
<accession>A4FTW3</accession>
<accession>Q2M1J0</accession>
<accession>Q86X37</accession>
<dbReference type="EMBL" id="AF459094">
    <property type="protein sequence ID" value="AAL67778.1"/>
    <property type="molecule type" value="mRNA"/>
</dbReference>
<dbReference type="EMBL" id="BC047322">
    <property type="protein sequence ID" value="AAH47322.1"/>
    <property type="status" value="ALT_SEQ"/>
    <property type="molecule type" value="mRNA"/>
</dbReference>
<dbReference type="EMBL" id="BC067770">
    <property type="protein sequence ID" value="AAH67770.1"/>
    <property type="molecule type" value="mRNA"/>
</dbReference>
<dbReference type="EMBL" id="BC112343">
    <property type="protein sequence ID" value="AAI12344.1"/>
    <property type="molecule type" value="mRNA"/>
</dbReference>
<dbReference type="CCDS" id="CCDS3991.1">
    <molecule id="Q8WXA9-1"/>
</dbReference>
<dbReference type="CCDS" id="CCDS43323.1">
    <molecule id="Q8WXA9-2"/>
</dbReference>
<dbReference type="RefSeq" id="NP_001070667.1">
    <molecule id="Q8WXA9-2"/>
    <property type="nucleotide sequence ID" value="NM_001077199.3"/>
</dbReference>
<dbReference type="RefSeq" id="NP_001257421.1">
    <property type="nucleotide sequence ID" value="NM_001270492.1"/>
</dbReference>
<dbReference type="RefSeq" id="NP_001310456.1">
    <molecule id="Q8WXA9-1"/>
    <property type="nucleotide sequence ID" value="NM_001323527.2"/>
</dbReference>
<dbReference type="RefSeq" id="NP_631907.1">
    <molecule id="Q8WXA9-1"/>
    <property type="nucleotide sequence ID" value="NM_139168.4"/>
</dbReference>
<dbReference type="RefSeq" id="XP_011541473.1">
    <molecule id="Q8WXA9-1"/>
    <property type="nucleotide sequence ID" value="XM_011543171.4"/>
</dbReference>
<dbReference type="RefSeq" id="XP_047272694.1">
    <molecule id="Q8WXA9-1"/>
    <property type="nucleotide sequence ID" value="XM_047416738.1"/>
</dbReference>
<dbReference type="RefSeq" id="XP_047272695.1">
    <molecule id="Q8WXA9-1"/>
    <property type="nucleotide sequence ID" value="XM_047416739.1"/>
</dbReference>
<dbReference type="RefSeq" id="XP_054207634.1">
    <molecule id="Q8WXA9-1"/>
    <property type="nucleotide sequence ID" value="XM_054351659.1"/>
</dbReference>
<dbReference type="RefSeq" id="XP_054207635.1">
    <molecule id="Q8WXA9-1"/>
    <property type="nucleotide sequence ID" value="XM_054351660.1"/>
</dbReference>
<dbReference type="RefSeq" id="XP_054207636.1">
    <molecule id="Q8WXA9-1"/>
    <property type="nucleotide sequence ID" value="XM_054351661.1"/>
</dbReference>
<dbReference type="SMR" id="Q8WXA9"/>
<dbReference type="BioGRID" id="126754">
    <property type="interactions" value="218"/>
</dbReference>
<dbReference type="CORUM" id="Q8WXA9"/>
<dbReference type="FunCoup" id="Q8WXA9">
    <property type="interactions" value="2446"/>
</dbReference>
<dbReference type="IntAct" id="Q8WXA9">
    <property type="interactions" value="89"/>
</dbReference>
<dbReference type="MINT" id="Q8WXA9"/>
<dbReference type="STRING" id="9606.ENSP00000334538"/>
<dbReference type="GlyGen" id="Q8WXA9">
    <property type="glycosylation" value="1 site, 1 O-linked glycan (1 site)"/>
</dbReference>
<dbReference type="iPTMnet" id="Q8WXA9"/>
<dbReference type="PhosphoSitePlus" id="Q8WXA9"/>
<dbReference type="SwissPalm" id="Q8WXA9"/>
<dbReference type="BioMuta" id="SREK1"/>
<dbReference type="DMDM" id="37537968"/>
<dbReference type="jPOST" id="Q8WXA9"/>
<dbReference type="MassIVE" id="Q8WXA9"/>
<dbReference type="PaxDb" id="9606-ENSP00000334538"/>
<dbReference type="PeptideAtlas" id="Q8WXA9"/>
<dbReference type="ProteomicsDB" id="74999">
    <molecule id="Q8WXA9-1"/>
</dbReference>
<dbReference type="ProteomicsDB" id="75000">
    <molecule id="Q8WXA9-2"/>
</dbReference>
<dbReference type="Pumba" id="Q8WXA9"/>
<dbReference type="Antibodypedia" id="23829">
    <property type="antibodies" value="94 antibodies from 21 providers"/>
</dbReference>
<dbReference type="DNASU" id="140890"/>
<dbReference type="Ensembl" id="ENST00000334121.11">
    <molecule id="Q8WXA9-2"/>
    <property type="protein sequence ID" value="ENSP00000334538.6"/>
    <property type="gene ID" value="ENSG00000153914.16"/>
</dbReference>
<dbReference type="Ensembl" id="ENST00000380918.7">
    <molecule id="Q8WXA9-1"/>
    <property type="protein sequence ID" value="ENSP00000370305.3"/>
    <property type="gene ID" value="ENSG00000153914.16"/>
</dbReference>
<dbReference type="GeneID" id="140890"/>
<dbReference type="KEGG" id="hsa:140890"/>
<dbReference type="MANE-Select" id="ENST00000334121.11">
    <molecule id="Q8WXA9-2"/>
    <property type="protein sequence ID" value="ENSP00000334538.6"/>
    <property type="RefSeq nucleotide sequence ID" value="NM_001077199.3"/>
    <property type="RefSeq protein sequence ID" value="NP_001070667.1"/>
</dbReference>
<dbReference type="UCSC" id="uc003jun.5">
    <molecule id="Q8WXA9-1"/>
    <property type="organism name" value="human"/>
</dbReference>
<dbReference type="AGR" id="HGNC:17882"/>
<dbReference type="CTD" id="140890"/>
<dbReference type="DisGeNET" id="140890"/>
<dbReference type="GeneCards" id="SREK1"/>
<dbReference type="HGNC" id="HGNC:17882">
    <property type="gene designation" value="SREK1"/>
</dbReference>
<dbReference type="HPA" id="ENSG00000153914">
    <property type="expression patterns" value="Low tissue specificity"/>
</dbReference>
<dbReference type="MIM" id="609268">
    <property type="type" value="gene"/>
</dbReference>
<dbReference type="neXtProt" id="NX_Q8WXA9"/>
<dbReference type="OpenTargets" id="ENSG00000153914"/>
<dbReference type="PharmGKB" id="PA38255"/>
<dbReference type="VEuPathDB" id="HostDB:ENSG00000153914"/>
<dbReference type="eggNOG" id="KOG4676">
    <property type="taxonomic scope" value="Eukaryota"/>
</dbReference>
<dbReference type="GeneTree" id="ENSGT00730000110872"/>
<dbReference type="HOGENOM" id="CLU_030029_2_0_1"/>
<dbReference type="InParanoid" id="Q8WXA9"/>
<dbReference type="OMA" id="MYPADEF"/>
<dbReference type="OrthoDB" id="7763451at2759"/>
<dbReference type="PAN-GO" id="Q8WXA9">
    <property type="GO annotations" value="2 GO annotations based on evolutionary models"/>
</dbReference>
<dbReference type="PhylomeDB" id="Q8WXA9"/>
<dbReference type="TreeFam" id="TF106266"/>
<dbReference type="PathwayCommons" id="Q8WXA9"/>
<dbReference type="SignaLink" id="Q8WXA9"/>
<dbReference type="BioGRID-ORCS" id="140890">
    <property type="hits" value="150 hits in 1164 CRISPR screens"/>
</dbReference>
<dbReference type="ChiTaRS" id="SREK1">
    <property type="organism name" value="human"/>
</dbReference>
<dbReference type="GeneWiki" id="SFRS12"/>
<dbReference type="GenomeRNAi" id="140890"/>
<dbReference type="Pharos" id="Q8WXA9">
    <property type="development level" value="Tbio"/>
</dbReference>
<dbReference type="PRO" id="PR:Q8WXA9"/>
<dbReference type="Proteomes" id="UP000005640">
    <property type="component" value="Chromosome 5"/>
</dbReference>
<dbReference type="RNAct" id="Q8WXA9">
    <property type="molecule type" value="protein"/>
</dbReference>
<dbReference type="Bgee" id="ENSG00000153914">
    <property type="expression patterns" value="Expressed in sural nerve and 208 other cell types or tissues"/>
</dbReference>
<dbReference type="ExpressionAtlas" id="Q8WXA9">
    <property type="expression patterns" value="baseline and differential"/>
</dbReference>
<dbReference type="GO" id="GO:0016607">
    <property type="term" value="C:nuclear speck"/>
    <property type="evidence" value="ECO:0000314"/>
    <property type="project" value="HPA"/>
</dbReference>
<dbReference type="GO" id="GO:0005654">
    <property type="term" value="C:nucleoplasm"/>
    <property type="evidence" value="ECO:0000314"/>
    <property type="project" value="HPA"/>
</dbReference>
<dbReference type="GO" id="GO:0005681">
    <property type="term" value="C:spliceosomal complex"/>
    <property type="evidence" value="ECO:0007669"/>
    <property type="project" value="UniProtKB-KW"/>
</dbReference>
<dbReference type="GO" id="GO:0003723">
    <property type="term" value="F:RNA binding"/>
    <property type="evidence" value="ECO:0007005"/>
    <property type="project" value="UniProtKB"/>
</dbReference>
<dbReference type="GO" id="GO:0006397">
    <property type="term" value="P:mRNA processing"/>
    <property type="evidence" value="ECO:0007669"/>
    <property type="project" value="UniProtKB-KW"/>
</dbReference>
<dbReference type="GO" id="GO:0008380">
    <property type="term" value="P:RNA splicing"/>
    <property type="evidence" value="ECO:0007669"/>
    <property type="project" value="UniProtKB-KW"/>
</dbReference>
<dbReference type="CDD" id="cd12260">
    <property type="entry name" value="RRM2_SREK1"/>
    <property type="match status" value="1"/>
</dbReference>
<dbReference type="FunFam" id="3.30.70.330:FF:000142">
    <property type="entry name" value="splicing regulatory glutamine/lysine-rich protein 1 isoform X1"/>
    <property type="match status" value="1"/>
</dbReference>
<dbReference type="Gene3D" id="3.30.70.330">
    <property type="match status" value="1"/>
</dbReference>
<dbReference type="InterPro" id="IPR012677">
    <property type="entry name" value="Nucleotide-bd_a/b_plait_sf"/>
</dbReference>
<dbReference type="InterPro" id="IPR035979">
    <property type="entry name" value="RBD_domain_sf"/>
</dbReference>
<dbReference type="InterPro" id="IPR000504">
    <property type="entry name" value="RRM_dom"/>
</dbReference>
<dbReference type="InterPro" id="IPR034192">
    <property type="entry name" value="SREK1_RRM2"/>
</dbReference>
<dbReference type="PANTHER" id="PTHR32343">
    <property type="entry name" value="SERINE/ARGININE-RICH SPLICING FACTOR"/>
    <property type="match status" value="1"/>
</dbReference>
<dbReference type="PANTHER" id="PTHR32343:SF71">
    <property type="entry name" value="SPLICING REGULATORY GLUTAMIC ACID AND LYSINE RICH PROTEIN 1"/>
    <property type="match status" value="1"/>
</dbReference>
<dbReference type="Pfam" id="PF00076">
    <property type="entry name" value="RRM_1"/>
    <property type="match status" value="1"/>
</dbReference>
<dbReference type="SMART" id="SM00360">
    <property type="entry name" value="RRM"/>
    <property type="match status" value="1"/>
</dbReference>
<dbReference type="SUPFAM" id="SSF54928">
    <property type="entry name" value="RNA-binding domain, RBD"/>
    <property type="match status" value="1"/>
</dbReference>
<dbReference type="PROSITE" id="PS50102">
    <property type="entry name" value="RRM"/>
    <property type="match status" value="1"/>
</dbReference>
<organism>
    <name type="scientific">Homo sapiens</name>
    <name type="common">Human</name>
    <dbReference type="NCBI Taxonomy" id="9606"/>
    <lineage>
        <taxon>Eukaryota</taxon>
        <taxon>Metazoa</taxon>
        <taxon>Chordata</taxon>
        <taxon>Craniata</taxon>
        <taxon>Vertebrata</taxon>
        <taxon>Euteleostomi</taxon>
        <taxon>Mammalia</taxon>
        <taxon>Eutheria</taxon>
        <taxon>Euarchontoglires</taxon>
        <taxon>Primates</taxon>
        <taxon>Haplorrhini</taxon>
        <taxon>Catarrhini</taxon>
        <taxon>Hominidae</taxon>
        <taxon>Homo</taxon>
    </lineage>
</organism>
<evidence type="ECO:0000250" key="1"/>
<evidence type="ECO:0000255" key="2">
    <source>
        <dbReference type="PROSITE-ProRule" id="PRU00176"/>
    </source>
</evidence>
<evidence type="ECO:0000256" key="3">
    <source>
        <dbReference type="SAM" id="MobiDB-lite"/>
    </source>
</evidence>
<evidence type="ECO:0000269" key="4">
    <source>
    </source>
</evidence>
<evidence type="ECO:0000269" key="5">
    <source>
    </source>
</evidence>
<evidence type="ECO:0000303" key="6">
    <source>
    </source>
</evidence>
<evidence type="ECO:0000305" key="7"/>
<evidence type="ECO:0007744" key="8">
    <source>
    </source>
</evidence>
<evidence type="ECO:0007744" key="9">
    <source>
    </source>
</evidence>
<evidence type="ECO:0007744" key="10">
    <source>
    </source>
</evidence>
<comment type="function">
    <text evidence="1">Participates in the regulation of alternative splicing by modulating the activity of other splice facors. Inhibits the splicing activity of SFRS1, SFRS2 and SFRS6. Augments the splicing activity of SFRS3 (By similarity).</text>
</comment>
<comment type="subunit">
    <text evidence="1 4 5">Homodimer. Binds SFRS1, SFRS2, SFRS3 and SFRS6. Interacts with the spliceosome (By similarity). Interacts with SREK1IP1.</text>
</comment>
<comment type="interaction">
    <interactant intactId="EBI-1044237">
        <id>Q8WXA9</id>
    </interactant>
    <interactant intactId="EBI-12248874">
        <id>A0A0C4DG62</id>
        <label>ARL6IP4</label>
    </interactant>
    <organismsDiffer>false</organismsDiffer>
    <experiments>3</experiments>
</comment>
<comment type="interaction">
    <interactant intactId="EBI-1044237">
        <id>Q8WXA9</id>
    </interactant>
    <interactant intactId="EBI-473189">
        <id>Q96D09</id>
        <label>GPRASP2</label>
    </interactant>
    <organismsDiffer>false</organismsDiffer>
    <experiments>3</experiments>
</comment>
<comment type="interaction">
    <interactant intactId="EBI-1044237">
        <id>Q8WXA9</id>
    </interactant>
    <interactant intactId="EBI-5280197">
        <id>O75400-2</id>
        <label>PRPF40A</label>
    </interactant>
    <organismsDiffer>false</organismsDiffer>
    <experiments>3</experiments>
</comment>
<comment type="interaction">
    <interactant intactId="EBI-1044237">
        <id>Q8WXA9</id>
    </interactant>
    <interactant intactId="EBI-395290">
        <id>Q14498</id>
        <label>RBM39</label>
    </interactant>
    <organismsDiffer>false</organismsDiffer>
    <experiments>3</experiments>
</comment>
<comment type="interaction">
    <interactant intactId="EBI-1044237">
        <id>Q8WXA9</id>
    </interactant>
    <interactant intactId="EBI-539478">
        <id>Q96SB4</id>
        <label>SRPK1</label>
    </interactant>
    <organismsDiffer>false</organismsDiffer>
    <experiments>2</experiments>
</comment>
<comment type="interaction">
    <interactant intactId="EBI-1044237">
        <id>Q8WXA9</id>
    </interactant>
    <interactant intactId="EBI-593303">
        <id>P78362</id>
        <label>SRPK2</label>
    </interactant>
    <organismsDiffer>false</organismsDiffer>
    <experiments>3</experiments>
</comment>
<comment type="interaction">
    <interactant intactId="EBI-1044237">
        <id>Q8WXA9</id>
    </interactant>
    <interactant intactId="EBI-1051785">
        <id>Q05519</id>
        <label>SRSF11</label>
    </interactant>
    <organismsDiffer>false</organismsDiffer>
    <experiments>3</experiments>
</comment>
<comment type="interaction">
    <interactant intactId="EBI-1044237">
        <id>Q8WXA9</id>
    </interactant>
    <interactant intactId="EBI-11975029">
        <id>Q05519-2</id>
        <label>SRSF11</label>
    </interactant>
    <organismsDiffer>false</organismsDiffer>
    <experiments>6</experiments>
</comment>
<comment type="interaction">
    <interactant intactId="EBI-1044237">
        <id>Q8WXA9</id>
    </interactant>
    <interactant intactId="EBI-359793">
        <id>P40222</id>
        <label>TXLNA</label>
    </interactant>
    <organismsDiffer>false</organismsDiffer>
    <experiments>3</experiments>
</comment>
<comment type="subcellular location">
    <subcellularLocation>
        <location>Nucleus</location>
    </subcellularLocation>
</comment>
<comment type="alternative products">
    <event type="alternative splicing"/>
    <isoform>
        <id>Q8WXA9-1</id>
        <name>1</name>
        <sequence type="displayed"/>
    </isoform>
    <isoform>
        <id>Q8WXA9-2</id>
        <name>2</name>
        <sequence type="described" ref="VSP_008399"/>
    </isoform>
</comment>
<comment type="similarity">
    <text evidence="7">Belongs to the splicing factor SR family.</text>
</comment>
<comment type="sequence caution" evidence="7">
    <conflict type="miscellaneous discrepancy">
        <sequence resource="EMBL-CDS" id="AAH47322"/>
    </conflict>
    <text>Contaminating sequence. Potential poly-A sequence.</text>
</comment>